<evidence type="ECO:0000255" key="1">
    <source>
        <dbReference type="HAMAP-Rule" id="MF_01315"/>
    </source>
</evidence>
<evidence type="ECO:0000256" key="2">
    <source>
        <dbReference type="SAM" id="MobiDB-lite"/>
    </source>
</evidence>
<evidence type="ECO:0000305" key="3"/>
<keyword id="KW-1185">Reference proteome</keyword>
<keyword id="KW-0687">Ribonucleoprotein</keyword>
<keyword id="KW-0689">Ribosomal protein</keyword>
<keyword id="KW-0694">RNA-binding</keyword>
<keyword id="KW-0699">rRNA-binding</keyword>
<keyword id="KW-0820">tRNA-binding</keyword>
<name>RS13_STRU0</name>
<feature type="chain" id="PRO_1000165641" description="Small ribosomal subunit protein uS13">
    <location>
        <begin position="1"/>
        <end position="121"/>
    </location>
</feature>
<feature type="region of interest" description="Disordered" evidence="2">
    <location>
        <begin position="93"/>
        <end position="121"/>
    </location>
</feature>
<feature type="compositionally biased region" description="Basic residues" evidence="2">
    <location>
        <begin position="106"/>
        <end position="121"/>
    </location>
</feature>
<protein>
    <recommendedName>
        <fullName evidence="1">Small ribosomal subunit protein uS13</fullName>
    </recommendedName>
    <alternativeName>
        <fullName evidence="3">30S ribosomal protein S13</fullName>
    </alternativeName>
</protein>
<accession>B9DSX4</accession>
<proteinExistence type="inferred from homology"/>
<dbReference type="EMBL" id="AM946015">
    <property type="protein sequence ID" value="CAR40482.1"/>
    <property type="molecule type" value="Genomic_DNA"/>
</dbReference>
<dbReference type="RefSeq" id="WP_012657651.1">
    <property type="nucleotide sequence ID" value="NC_012004.1"/>
</dbReference>
<dbReference type="SMR" id="B9DSX4"/>
<dbReference type="STRING" id="218495.SUB0092"/>
<dbReference type="GeneID" id="93825318"/>
<dbReference type="KEGG" id="sub:SUB0092"/>
<dbReference type="eggNOG" id="COG0099">
    <property type="taxonomic scope" value="Bacteria"/>
</dbReference>
<dbReference type="HOGENOM" id="CLU_103849_1_1_9"/>
<dbReference type="OrthoDB" id="9803610at2"/>
<dbReference type="Proteomes" id="UP000000449">
    <property type="component" value="Chromosome"/>
</dbReference>
<dbReference type="GO" id="GO:0005829">
    <property type="term" value="C:cytosol"/>
    <property type="evidence" value="ECO:0007669"/>
    <property type="project" value="TreeGrafter"/>
</dbReference>
<dbReference type="GO" id="GO:0015935">
    <property type="term" value="C:small ribosomal subunit"/>
    <property type="evidence" value="ECO:0007669"/>
    <property type="project" value="TreeGrafter"/>
</dbReference>
<dbReference type="GO" id="GO:0019843">
    <property type="term" value="F:rRNA binding"/>
    <property type="evidence" value="ECO:0007669"/>
    <property type="project" value="UniProtKB-UniRule"/>
</dbReference>
<dbReference type="GO" id="GO:0003735">
    <property type="term" value="F:structural constituent of ribosome"/>
    <property type="evidence" value="ECO:0007669"/>
    <property type="project" value="InterPro"/>
</dbReference>
<dbReference type="GO" id="GO:0000049">
    <property type="term" value="F:tRNA binding"/>
    <property type="evidence" value="ECO:0007669"/>
    <property type="project" value="UniProtKB-UniRule"/>
</dbReference>
<dbReference type="GO" id="GO:0006412">
    <property type="term" value="P:translation"/>
    <property type="evidence" value="ECO:0007669"/>
    <property type="project" value="UniProtKB-UniRule"/>
</dbReference>
<dbReference type="FunFam" id="1.10.8.50:FF:000001">
    <property type="entry name" value="30S ribosomal protein S13"/>
    <property type="match status" value="1"/>
</dbReference>
<dbReference type="FunFam" id="4.10.910.10:FF:000001">
    <property type="entry name" value="30S ribosomal protein S13"/>
    <property type="match status" value="1"/>
</dbReference>
<dbReference type="Gene3D" id="1.10.8.50">
    <property type="match status" value="1"/>
</dbReference>
<dbReference type="Gene3D" id="4.10.910.10">
    <property type="entry name" value="30s ribosomal protein s13, domain 2"/>
    <property type="match status" value="1"/>
</dbReference>
<dbReference type="HAMAP" id="MF_01315">
    <property type="entry name" value="Ribosomal_uS13"/>
    <property type="match status" value="1"/>
</dbReference>
<dbReference type="InterPro" id="IPR027437">
    <property type="entry name" value="Rbsml_uS13_C"/>
</dbReference>
<dbReference type="InterPro" id="IPR001892">
    <property type="entry name" value="Ribosomal_uS13"/>
</dbReference>
<dbReference type="InterPro" id="IPR010979">
    <property type="entry name" value="Ribosomal_uS13-like_H2TH"/>
</dbReference>
<dbReference type="InterPro" id="IPR019980">
    <property type="entry name" value="Ribosomal_uS13_bac-type"/>
</dbReference>
<dbReference type="InterPro" id="IPR018269">
    <property type="entry name" value="Ribosomal_uS13_CS"/>
</dbReference>
<dbReference type="NCBIfam" id="TIGR03631">
    <property type="entry name" value="uS13_bact"/>
    <property type="match status" value="1"/>
</dbReference>
<dbReference type="PANTHER" id="PTHR10871">
    <property type="entry name" value="30S RIBOSOMAL PROTEIN S13/40S RIBOSOMAL PROTEIN S18"/>
    <property type="match status" value="1"/>
</dbReference>
<dbReference type="PANTHER" id="PTHR10871:SF1">
    <property type="entry name" value="SMALL RIBOSOMAL SUBUNIT PROTEIN US13M"/>
    <property type="match status" value="1"/>
</dbReference>
<dbReference type="Pfam" id="PF00416">
    <property type="entry name" value="Ribosomal_S13"/>
    <property type="match status" value="1"/>
</dbReference>
<dbReference type="PIRSF" id="PIRSF002134">
    <property type="entry name" value="Ribosomal_S13"/>
    <property type="match status" value="1"/>
</dbReference>
<dbReference type="SUPFAM" id="SSF46946">
    <property type="entry name" value="S13-like H2TH domain"/>
    <property type="match status" value="1"/>
</dbReference>
<dbReference type="PROSITE" id="PS00646">
    <property type="entry name" value="RIBOSOMAL_S13_1"/>
    <property type="match status" value="1"/>
</dbReference>
<dbReference type="PROSITE" id="PS50159">
    <property type="entry name" value="RIBOSOMAL_S13_2"/>
    <property type="match status" value="1"/>
</dbReference>
<sequence>MARIAGVDIPNDKRVVISLTYVYGIGLATSKKILAAAGISEDVRVKDLTSDQEDAIRREIDSIKVEGDLRREVNLNIKRLMEIGSYRGIRHRRGLPVRGQNTKNNARTRKGKATAIAGKKK</sequence>
<organism>
    <name type="scientific">Streptococcus uberis (strain ATCC BAA-854 / 0140J)</name>
    <dbReference type="NCBI Taxonomy" id="218495"/>
    <lineage>
        <taxon>Bacteria</taxon>
        <taxon>Bacillati</taxon>
        <taxon>Bacillota</taxon>
        <taxon>Bacilli</taxon>
        <taxon>Lactobacillales</taxon>
        <taxon>Streptococcaceae</taxon>
        <taxon>Streptococcus</taxon>
    </lineage>
</organism>
<reference key="1">
    <citation type="journal article" date="2009" name="BMC Genomics">
        <title>Evidence for niche adaptation in the genome of the bovine pathogen Streptococcus uberis.</title>
        <authorList>
            <person name="Ward P.N."/>
            <person name="Holden M.T.G."/>
            <person name="Leigh J.A."/>
            <person name="Lennard N."/>
            <person name="Bignell A."/>
            <person name="Barron A."/>
            <person name="Clark L."/>
            <person name="Quail M.A."/>
            <person name="Woodward J."/>
            <person name="Barrell B.G."/>
            <person name="Egan S.A."/>
            <person name="Field T.R."/>
            <person name="Maskell D."/>
            <person name="Kehoe M."/>
            <person name="Dowson C.G."/>
            <person name="Chanter N."/>
            <person name="Whatmore A.M."/>
            <person name="Bentley S.D."/>
            <person name="Parkhill J."/>
        </authorList>
    </citation>
    <scope>NUCLEOTIDE SEQUENCE [LARGE SCALE GENOMIC DNA]</scope>
    <source>
        <strain>ATCC BAA-854 / 0140J</strain>
    </source>
</reference>
<comment type="function">
    <text evidence="1">Located at the top of the head of the 30S subunit, it contacts several helices of the 16S rRNA. In the 70S ribosome it contacts the 23S rRNA (bridge B1a) and protein L5 of the 50S subunit (bridge B1b), connecting the 2 subunits; these bridges are implicated in subunit movement. Contacts the tRNAs in the A and P-sites.</text>
</comment>
<comment type="subunit">
    <text evidence="1">Part of the 30S ribosomal subunit. Forms a loose heterodimer with protein S19. Forms two bridges to the 50S subunit in the 70S ribosome.</text>
</comment>
<comment type="similarity">
    <text evidence="1">Belongs to the universal ribosomal protein uS13 family.</text>
</comment>
<gene>
    <name evidence="1" type="primary">rpsM</name>
    <name type="ordered locus">SUB0092</name>
</gene>